<comment type="function">
    <text evidence="1">Secreted subtilisin-like serine protease with keratinolytic activity that contributes to pathogenicity.</text>
</comment>
<comment type="subcellular location">
    <subcellularLocation>
        <location evidence="1">Secreted</location>
    </subcellularLocation>
</comment>
<comment type="similarity">
    <text evidence="4">Belongs to the peptidase S8 family.</text>
</comment>
<keyword id="KW-0325">Glycoprotein</keyword>
<keyword id="KW-0378">Hydrolase</keyword>
<keyword id="KW-0645">Protease</keyword>
<keyword id="KW-1185">Reference proteome</keyword>
<keyword id="KW-0964">Secreted</keyword>
<keyword id="KW-0720">Serine protease</keyword>
<keyword id="KW-0732">Signal</keyword>
<keyword id="KW-0843">Virulence</keyword>
<keyword id="KW-0865">Zymogen</keyword>
<protein>
    <recommendedName>
        <fullName>Subtilisin-like protease 6</fullName>
        <ecNumber>3.4.21.-</ecNumber>
    </recommendedName>
</protein>
<accession>E4V4J8</accession>
<dbReference type="EC" id="3.4.21.-"/>
<dbReference type="EMBL" id="DS989829">
    <property type="protein sequence ID" value="EFR04922.1"/>
    <property type="molecule type" value="Genomic_DNA"/>
</dbReference>
<dbReference type="RefSeq" id="XP_003169757.1">
    <property type="nucleotide sequence ID" value="XM_003169709.1"/>
</dbReference>
<dbReference type="SMR" id="E4V4J8"/>
<dbReference type="STRING" id="535722.E4V4J8"/>
<dbReference type="GlyCosmos" id="E4V4J8">
    <property type="glycosylation" value="4 sites, No reported glycans"/>
</dbReference>
<dbReference type="GeneID" id="10024988"/>
<dbReference type="VEuPathDB" id="FungiDB:MGYG_07924"/>
<dbReference type="eggNOG" id="KOG1153">
    <property type="taxonomic scope" value="Eukaryota"/>
</dbReference>
<dbReference type="HOGENOM" id="CLU_011263_1_3_1"/>
<dbReference type="InParanoid" id="E4V4J8"/>
<dbReference type="OMA" id="YGMSGIN"/>
<dbReference type="OrthoDB" id="206201at2759"/>
<dbReference type="Proteomes" id="UP000002669">
    <property type="component" value="Unassembled WGS sequence"/>
</dbReference>
<dbReference type="GO" id="GO:0005576">
    <property type="term" value="C:extracellular region"/>
    <property type="evidence" value="ECO:0007669"/>
    <property type="project" value="UniProtKB-SubCell"/>
</dbReference>
<dbReference type="GO" id="GO:0004252">
    <property type="term" value="F:serine-type endopeptidase activity"/>
    <property type="evidence" value="ECO:0007669"/>
    <property type="project" value="InterPro"/>
</dbReference>
<dbReference type="GO" id="GO:0006508">
    <property type="term" value="P:proteolysis"/>
    <property type="evidence" value="ECO:0007669"/>
    <property type="project" value="UniProtKB-KW"/>
</dbReference>
<dbReference type="CDD" id="cd04077">
    <property type="entry name" value="Peptidases_S8_PCSK9_ProteinaseK_like"/>
    <property type="match status" value="1"/>
</dbReference>
<dbReference type="FunFam" id="3.40.50.200:FF:000014">
    <property type="entry name" value="Proteinase K"/>
    <property type="match status" value="1"/>
</dbReference>
<dbReference type="Gene3D" id="3.30.70.80">
    <property type="entry name" value="Peptidase S8 propeptide/proteinase inhibitor I9"/>
    <property type="match status" value="1"/>
</dbReference>
<dbReference type="Gene3D" id="3.40.50.200">
    <property type="entry name" value="Peptidase S8/S53 domain"/>
    <property type="match status" value="1"/>
</dbReference>
<dbReference type="InterPro" id="IPR034193">
    <property type="entry name" value="PCSK9_ProteinaseK-like"/>
</dbReference>
<dbReference type="InterPro" id="IPR000209">
    <property type="entry name" value="Peptidase_S8/S53_dom"/>
</dbReference>
<dbReference type="InterPro" id="IPR036852">
    <property type="entry name" value="Peptidase_S8/S53_dom_sf"/>
</dbReference>
<dbReference type="InterPro" id="IPR023827">
    <property type="entry name" value="Peptidase_S8_Asp-AS"/>
</dbReference>
<dbReference type="InterPro" id="IPR022398">
    <property type="entry name" value="Peptidase_S8_His-AS"/>
</dbReference>
<dbReference type="InterPro" id="IPR023828">
    <property type="entry name" value="Peptidase_S8_Ser-AS"/>
</dbReference>
<dbReference type="InterPro" id="IPR050131">
    <property type="entry name" value="Peptidase_S8_subtilisin-like"/>
</dbReference>
<dbReference type="InterPro" id="IPR015500">
    <property type="entry name" value="Peptidase_S8_subtilisin-rel"/>
</dbReference>
<dbReference type="InterPro" id="IPR010259">
    <property type="entry name" value="S8pro/Inhibitor_I9"/>
</dbReference>
<dbReference type="InterPro" id="IPR037045">
    <property type="entry name" value="S8pro/Inhibitor_I9_sf"/>
</dbReference>
<dbReference type="PANTHER" id="PTHR43806:SF11">
    <property type="entry name" value="CEREVISIN-RELATED"/>
    <property type="match status" value="1"/>
</dbReference>
<dbReference type="PANTHER" id="PTHR43806">
    <property type="entry name" value="PEPTIDASE S8"/>
    <property type="match status" value="1"/>
</dbReference>
<dbReference type="Pfam" id="PF05922">
    <property type="entry name" value="Inhibitor_I9"/>
    <property type="match status" value="1"/>
</dbReference>
<dbReference type="Pfam" id="PF00082">
    <property type="entry name" value="Peptidase_S8"/>
    <property type="match status" value="1"/>
</dbReference>
<dbReference type="PRINTS" id="PR00723">
    <property type="entry name" value="SUBTILISIN"/>
</dbReference>
<dbReference type="SUPFAM" id="SSF54897">
    <property type="entry name" value="Protease propeptides/inhibitors"/>
    <property type="match status" value="1"/>
</dbReference>
<dbReference type="SUPFAM" id="SSF52743">
    <property type="entry name" value="Subtilisin-like"/>
    <property type="match status" value="1"/>
</dbReference>
<dbReference type="PROSITE" id="PS51892">
    <property type="entry name" value="SUBTILASE"/>
    <property type="match status" value="1"/>
</dbReference>
<dbReference type="PROSITE" id="PS00136">
    <property type="entry name" value="SUBTILASE_ASP"/>
    <property type="match status" value="1"/>
</dbReference>
<dbReference type="PROSITE" id="PS00137">
    <property type="entry name" value="SUBTILASE_HIS"/>
    <property type="match status" value="1"/>
</dbReference>
<dbReference type="PROSITE" id="PS00138">
    <property type="entry name" value="SUBTILASE_SER"/>
    <property type="match status" value="1"/>
</dbReference>
<reference key="1">
    <citation type="journal article" date="2012" name="MBio">
        <title>Comparative genome analysis of Trichophyton rubrum and related dermatophytes reveals candidate genes involved in infection.</title>
        <authorList>
            <person name="Martinez D.A."/>
            <person name="Oliver B.G."/>
            <person name="Graeser Y."/>
            <person name="Goldberg J.M."/>
            <person name="Li W."/>
            <person name="Martinez-Rossi N.M."/>
            <person name="Monod M."/>
            <person name="Shelest E."/>
            <person name="Barton R.C."/>
            <person name="Birch E."/>
            <person name="Brakhage A.A."/>
            <person name="Chen Z."/>
            <person name="Gurr S.J."/>
            <person name="Heiman D."/>
            <person name="Heitman J."/>
            <person name="Kosti I."/>
            <person name="Rossi A."/>
            <person name="Saif S."/>
            <person name="Samalova M."/>
            <person name="Saunders C.W."/>
            <person name="Shea T."/>
            <person name="Summerbell R.C."/>
            <person name="Xu J."/>
            <person name="Young S."/>
            <person name="Zeng Q."/>
            <person name="Birren B.W."/>
            <person name="Cuomo C.A."/>
            <person name="White T.C."/>
        </authorList>
    </citation>
    <scope>NUCLEOTIDE SEQUENCE [LARGE SCALE GENOMIC DNA]</scope>
    <source>
        <strain>ATCC MYA-4604 / CBS 118893</strain>
    </source>
</reference>
<evidence type="ECO:0000250" key="1"/>
<evidence type="ECO:0000255" key="2"/>
<evidence type="ECO:0000255" key="3">
    <source>
        <dbReference type="PROSITE-ProRule" id="PRU01240"/>
    </source>
</evidence>
<evidence type="ECO:0000305" key="4"/>
<gene>
    <name type="primary">SUB6</name>
    <name type="ORF">MGYG_07924</name>
</gene>
<proteinExistence type="inferred from homology"/>
<name>SUB6_ARTGP</name>
<feature type="signal peptide" evidence="2">
    <location>
        <begin position="1"/>
        <end position="20"/>
    </location>
</feature>
<feature type="propeptide" id="PRO_0000406374" evidence="1">
    <location>
        <begin position="21"/>
        <end position="123"/>
    </location>
</feature>
<feature type="chain" id="PRO_0000406375" description="Subtilisin-like protease 6">
    <location>
        <begin position="124"/>
        <end position="408"/>
    </location>
</feature>
<feature type="domain" description="Inhibitor I9" evidence="2">
    <location>
        <begin position="36"/>
        <end position="119"/>
    </location>
</feature>
<feature type="domain" description="Peptidase S8" evidence="3">
    <location>
        <begin position="131"/>
        <end position="408"/>
    </location>
</feature>
<feature type="active site" description="Charge relay system" evidence="3">
    <location>
        <position position="163"/>
    </location>
</feature>
<feature type="active site" description="Charge relay system" evidence="3">
    <location>
        <position position="194"/>
    </location>
</feature>
<feature type="active site" description="Charge relay system" evidence="3">
    <location>
        <position position="354"/>
    </location>
</feature>
<feature type="glycosylation site" description="N-linked (GlcNAc...) asparagine" evidence="2">
    <location>
        <position position="248"/>
    </location>
</feature>
<feature type="glycosylation site" description="N-linked (GlcNAc...) asparagine" evidence="2">
    <location>
        <position position="260"/>
    </location>
</feature>
<feature type="glycosylation site" description="N-linked (GlcNAc...) asparagine" evidence="2">
    <location>
        <position position="345"/>
    </location>
</feature>
<feature type="glycosylation site" description="N-linked (GlcNAc...) asparagine" evidence="2">
    <location>
        <position position="404"/>
    </location>
</feature>
<sequence length="408" mass="42209">MGFITKAIPIVLAALSTVDGAKILEAGPHAETIPNKYIVVMKQDVSHEAFNAHATWVGNNFSRRPMRRGGSFKPMAGMQHKFSLGGTFKAYTGEFDEAMIKDISNHDDVDFIERDTVVKATAITQQDNVPSWGLARVGSKEAGGSTYYYDDTAGKGVTAYIIDTGIDIHHGDFGGRAKWGKNFVDKMDEDCNGHGSHVAGTVGGTKFGVAKGVNLVAVKVLDCEGSGSNSGVIMGMEWAMKEASGGGNSTAKAAGKSVMNMSLGGPRSEASNKAAKAIADAGIFMAVAAGNDNMDAQHSSPASEPSICTVAASSEDDSKADFSNYGAVVDIYAPGNEITSVKPGNGTDTLSGTSMASPHVCGLGAYLIGLGKEGGPGLCDTIKEMATDAIKNPGEGTTGKLIYNGSGK</sequence>
<organism>
    <name type="scientific">Arthroderma gypseum (strain ATCC MYA-4604 / CBS 118893)</name>
    <name type="common">Microsporum gypseum</name>
    <dbReference type="NCBI Taxonomy" id="535722"/>
    <lineage>
        <taxon>Eukaryota</taxon>
        <taxon>Fungi</taxon>
        <taxon>Dikarya</taxon>
        <taxon>Ascomycota</taxon>
        <taxon>Pezizomycotina</taxon>
        <taxon>Eurotiomycetes</taxon>
        <taxon>Eurotiomycetidae</taxon>
        <taxon>Onygenales</taxon>
        <taxon>Arthrodermataceae</taxon>
        <taxon>Nannizzia</taxon>
    </lineage>
</organism>